<sequence>MAEKEHYVRTKPHVNIGTIGHVDHGKTTLTAAITTVLAEKGLAKAEDYSQIDAAPEEKERGITINTAHVEYETENRHYAHMDAPGHADYIKNMITGAAQMDGAILVVAATDGPMPQTREHILLARQVGVNYIVVFLNKCDLVDDPELIDLVEMEVRDLLTEYDYPGDDIPVVRGSALKALQGDKEAQDQIMKLMDIVDEYIPTPERQTDKPFLMPVEDVFTITGRGTVASGRIDRGTVKVGDEVEIVGLVDKVLKSVVTGLEMFHKTLDLGEAGDNVGVLLRGVDRDQVVRGQVLAAPGSIQTHKKFKAQVYVLKKDEGGRHTPFFSDYRPQFYFHTTDITGEIELPEGTEMVMPGDNTEFTVTLIKPAAIEKGTKFTIREGGRTVGAGQVTEILD</sequence>
<dbReference type="EC" id="3.6.5.3" evidence="2"/>
<dbReference type="EMBL" id="CP000033">
    <property type="protein sequence ID" value="AAV42706.1"/>
    <property type="molecule type" value="Genomic_DNA"/>
</dbReference>
<dbReference type="RefSeq" id="WP_003546862.1">
    <property type="nucleotide sequence ID" value="NC_006814.3"/>
</dbReference>
<dbReference type="RefSeq" id="YP_193737.1">
    <property type="nucleotide sequence ID" value="NC_006814.3"/>
</dbReference>
<dbReference type="SMR" id="Q5FKR8"/>
<dbReference type="STRING" id="272621.LBA0845"/>
<dbReference type="GeneID" id="93290032"/>
<dbReference type="KEGG" id="lac:LBA0845"/>
<dbReference type="PATRIC" id="fig|272621.13.peg.807"/>
<dbReference type="eggNOG" id="COG0050">
    <property type="taxonomic scope" value="Bacteria"/>
</dbReference>
<dbReference type="HOGENOM" id="CLU_007265_0_1_9"/>
<dbReference type="OrthoDB" id="9804504at2"/>
<dbReference type="BioCyc" id="LACI272621:G1G49-856-MONOMER"/>
<dbReference type="Proteomes" id="UP000006381">
    <property type="component" value="Chromosome"/>
</dbReference>
<dbReference type="GO" id="GO:0005829">
    <property type="term" value="C:cytosol"/>
    <property type="evidence" value="ECO:0007669"/>
    <property type="project" value="TreeGrafter"/>
</dbReference>
<dbReference type="GO" id="GO:0005525">
    <property type="term" value="F:GTP binding"/>
    <property type="evidence" value="ECO:0007669"/>
    <property type="project" value="UniProtKB-UniRule"/>
</dbReference>
<dbReference type="GO" id="GO:0003924">
    <property type="term" value="F:GTPase activity"/>
    <property type="evidence" value="ECO:0007669"/>
    <property type="project" value="InterPro"/>
</dbReference>
<dbReference type="GO" id="GO:0003746">
    <property type="term" value="F:translation elongation factor activity"/>
    <property type="evidence" value="ECO:0007669"/>
    <property type="project" value="UniProtKB-UniRule"/>
</dbReference>
<dbReference type="CDD" id="cd01884">
    <property type="entry name" value="EF_Tu"/>
    <property type="match status" value="1"/>
</dbReference>
<dbReference type="CDD" id="cd03697">
    <property type="entry name" value="EFTU_II"/>
    <property type="match status" value="1"/>
</dbReference>
<dbReference type="CDD" id="cd03707">
    <property type="entry name" value="EFTU_III"/>
    <property type="match status" value="1"/>
</dbReference>
<dbReference type="FunFam" id="2.40.30.10:FF:000001">
    <property type="entry name" value="Elongation factor Tu"/>
    <property type="match status" value="1"/>
</dbReference>
<dbReference type="FunFam" id="3.40.50.300:FF:000003">
    <property type="entry name" value="Elongation factor Tu"/>
    <property type="match status" value="1"/>
</dbReference>
<dbReference type="Gene3D" id="3.40.50.300">
    <property type="entry name" value="P-loop containing nucleotide triphosphate hydrolases"/>
    <property type="match status" value="1"/>
</dbReference>
<dbReference type="Gene3D" id="2.40.30.10">
    <property type="entry name" value="Translation factors"/>
    <property type="match status" value="2"/>
</dbReference>
<dbReference type="HAMAP" id="MF_00118_B">
    <property type="entry name" value="EF_Tu_B"/>
    <property type="match status" value="1"/>
</dbReference>
<dbReference type="InterPro" id="IPR041709">
    <property type="entry name" value="EF-Tu_GTP-bd"/>
</dbReference>
<dbReference type="InterPro" id="IPR050055">
    <property type="entry name" value="EF-Tu_GTPase"/>
</dbReference>
<dbReference type="InterPro" id="IPR004161">
    <property type="entry name" value="EFTu-like_2"/>
</dbReference>
<dbReference type="InterPro" id="IPR033720">
    <property type="entry name" value="EFTU_2"/>
</dbReference>
<dbReference type="InterPro" id="IPR031157">
    <property type="entry name" value="G_TR_CS"/>
</dbReference>
<dbReference type="InterPro" id="IPR027417">
    <property type="entry name" value="P-loop_NTPase"/>
</dbReference>
<dbReference type="InterPro" id="IPR005225">
    <property type="entry name" value="Small_GTP-bd"/>
</dbReference>
<dbReference type="InterPro" id="IPR000795">
    <property type="entry name" value="T_Tr_GTP-bd_dom"/>
</dbReference>
<dbReference type="InterPro" id="IPR009000">
    <property type="entry name" value="Transl_B-barrel_sf"/>
</dbReference>
<dbReference type="InterPro" id="IPR009001">
    <property type="entry name" value="Transl_elong_EF1A/Init_IF2_C"/>
</dbReference>
<dbReference type="InterPro" id="IPR004541">
    <property type="entry name" value="Transl_elong_EFTu/EF1A_bac/org"/>
</dbReference>
<dbReference type="InterPro" id="IPR004160">
    <property type="entry name" value="Transl_elong_EFTu/EF1A_C"/>
</dbReference>
<dbReference type="NCBIfam" id="TIGR00485">
    <property type="entry name" value="EF-Tu"/>
    <property type="match status" value="1"/>
</dbReference>
<dbReference type="NCBIfam" id="NF000766">
    <property type="entry name" value="PRK00049.1"/>
    <property type="match status" value="1"/>
</dbReference>
<dbReference type="NCBIfam" id="NF009372">
    <property type="entry name" value="PRK12735.1"/>
    <property type="match status" value="1"/>
</dbReference>
<dbReference type="NCBIfam" id="NF009373">
    <property type="entry name" value="PRK12736.1"/>
    <property type="match status" value="1"/>
</dbReference>
<dbReference type="NCBIfam" id="TIGR00231">
    <property type="entry name" value="small_GTP"/>
    <property type="match status" value="1"/>
</dbReference>
<dbReference type="PANTHER" id="PTHR43721:SF22">
    <property type="entry name" value="ELONGATION FACTOR TU, MITOCHONDRIAL"/>
    <property type="match status" value="1"/>
</dbReference>
<dbReference type="PANTHER" id="PTHR43721">
    <property type="entry name" value="ELONGATION FACTOR TU-RELATED"/>
    <property type="match status" value="1"/>
</dbReference>
<dbReference type="Pfam" id="PF00009">
    <property type="entry name" value="GTP_EFTU"/>
    <property type="match status" value="1"/>
</dbReference>
<dbReference type="Pfam" id="PF03144">
    <property type="entry name" value="GTP_EFTU_D2"/>
    <property type="match status" value="1"/>
</dbReference>
<dbReference type="Pfam" id="PF03143">
    <property type="entry name" value="GTP_EFTU_D3"/>
    <property type="match status" value="1"/>
</dbReference>
<dbReference type="PRINTS" id="PR00315">
    <property type="entry name" value="ELONGATNFCT"/>
</dbReference>
<dbReference type="SUPFAM" id="SSF50465">
    <property type="entry name" value="EF-Tu/eEF-1alpha/eIF2-gamma C-terminal domain"/>
    <property type="match status" value="1"/>
</dbReference>
<dbReference type="SUPFAM" id="SSF52540">
    <property type="entry name" value="P-loop containing nucleoside triphosphate hydrolases"/>
    <property type="match status" value="1"/>
</dbReference>
<dbReference type="SUPFAM" id="SSF50447">
    <property type="entry name" value="Translation proteins"/>
    <property type="match status" value="1"/>
</dbReference>
<dbReference type="PROSITE" id="PS00301">
    <property type="entry name" value="G_TR_1"/>
    <property type="match status" value="1"/>
</dbReference>
<dbReference type="PROSITE" id="PS51722">
    <property type="entry name" value="G_TR_2"/>
    <property type="match status" value="1"/>
</dbReference>
<organism>
    <name type="scientific">Lactobacillus acidophilus (strain ATCC 700396 / NCK56 / N2 / NCFM)</name>
    <dbReference type="NCBI Taxonomy" id="272621"/>
    <lineage>
        <taxon>Bacteria</taxon>
        <taxon>Bacillati</taxon>
        <taxon>Bacillota</taxon>
        <taxon>Bacilli</taxon>
        <taxon>Lactobacillales</taxon>
        <taxon>Lactobacillaceae</taxon>
        <taxon>Lactobacillus</taxon>
    </lineage>
</organism>
<proteinExistence type="inferred from homology"/>
<protein>
    <recommendedName>
        <fullName evidence="2">Elongation factor Tu</fullName>
        <shortName evidence="2">EF-Tu</shortName>
        <ecNumber evidence="2">3.6.5.3</ecNumber>
    </recommendedName>
</protein>
<accession>Q5FKR8</accession>
<reference key="1">
    <citation type="journal article" date="2005" name="Proc. Natl. Acad. Sci. U.S.A.">
        <title>Complete genome sequence of the probiotic lactic acid bacterium Lactobacillus acidophilus NCFM.</title>
        <authorList>
            <person name="Altermann E."/>
            <person name="Russell W.M."/>
            <person name="Azcarate-Peril M.A."/>
            <person name="Barrangou R."/>
            <person name="Buck B.L."/>
            <person name="McAuliffe O."/>
            <person name="Souther N."/>
            <person name="Dobson A."/>
            <person name="Duong T."/>
            <person name="Callanan M."/>
            <person name="Lick S."/>
            <person name="Hamrick A."/>
            <person name="Cano R."/>
            <person name="Klaenhammer T.R."/>
        </authorList>
    </citation>
    <scope>NUCLEOTIDE SEQUENCE [LARGE SCALE GENOMIC DNA]</scope>
    <source>
        <strain>ATCC 700396 / NCK56 / N2 / NCFM</strain>
    </source>
</reference>
<name>EFTU_LACAC</name>
<evidence type="ECO:0000250" key="1"/>
<evidence type="ECO:0000255" key="2">
    <source>
        <dbReference type="HAMAP-Rule" id="MF_00118"/>
    </source>
</evidence>
<gene>
    <name evidence="2" type="primary">tuf</name>
    <name type="ordered locus">LBA0845</name>
</gene>
<comment type="function">
    <text evidence="2">GTP hydrolase that promotes the GTP-dependent binding of aminoacyl-tRNA to the A-site of ribosomes during protein biosynthesis.</text>
</comment>
<comment type="catalytic activity">
    <reaction evidence="2">
        <text>GTP + H2O = GDP + phosphate + H(+)</text>
        <dbReference type="Rhea" id="RHEA:19669"/>
        <dbReference type="ChEBI" id="CHEBI:15377"/>
        <dbReference type="ChEBI" id="CHEBI:15378"/>
        <dbReference type="ChEBI" id="CHEBI:37565"/>
        <dbReference type="ChEBI" id="CHEBI:43474"/>
        <dbReference type="ChEBI" id="CHEBI:58189"/>
        <dbReference type="EC" id="3.6.5.3"/>
    </reaction>
    <physiologicalReaction direction="left-to-right" evidence="2">
        <dbReference type="Rhea" id="RHEA:19670"/>
    </physiologicalReaction>
</comment>
<comment type="subunit">
    <text evidence="2">Monomer.</text>
</comment>
<comment type="subcellular location">
    <subcellularLocation>
        <location evidence="2">Cytoplasm</location>
    </subcellularLocation>
</comment>
<comment type="similarity">
    <text evidence="2">Belongs to the TRAFAC class translation factor GTPase superfamily. Classic translation factor GTPase family. EF-Tu/EF-1A subfamily.</text>
</comment>
<keyword id="KW-0963">Cytoplasm</keyword>
<keyword id="KW-0251">Elongation factor</keyword>
<keyword id="KW-0342">GTP-binding</keyword>
<keyword id="KW-0378">Hydrolase</keyword>
<keyword id="KW-0460">Magnesium</keyword>
<keyword id="KW-0479">Metal-binding</keyword>
<keyword id="KW-0547">Nucleotide-binding</keyword>
<keyword id="KW-0648">Protein biosynthesis</keyword>
<keyword id="KW-1185">Reference proteome</keyword>
<feature type="chain" id="PRO_0000337411" description="Elongation factor Tu">
    <location>
        <begin position="1"/>
        <end position="396"/>
    </location>
</feature>
<feature type="domain" description="tr-type G">
    <location>
        <begin position="11"/>
        <end position="205"/>
    </location>
</feature>
<feature type="region of interest" description="G1" evidence="1">
    <location>
        <begin position="20"/>
        <end position="27"/>
    </location>
</feature>
<feature type="region of interest" description="G2" evidence="1">
    <location>
        <begin position="61"/>
        <end position="65"/>
    </location>
</feature>
<feature type="region of interest" description="G3" evidence="1">
    <location>
        <begin position="82"/>
        <end position="85"/>
    </location>
</feature>
<feature type="region of interest" description="G4" evidence="1">
    <location>
        <begin position="137"/>
        <end position="140"/>
    </location>
</feature>
<feature type="region of interest" description="G5" evidence="1">
    <location>
        <begin position="175"/>
        <end position="177"/>
    </location>
</feature>
<feature type="binding site" evidence="2">
    <location>
        <begin position="20"/>
        <end position="27"/>
    </location>
    <ligand>
        <name>GTP</name>
        <dbReference type="ChEBI" id="CHEBI:37565"/>
    </ligand>
</feature>
<feature type="binding site" evidence="2">
    <location>
        <position position="27"/>
    </location>
    <ligand>
        <name>Mg(2+)</name>
        <dbReference type="ChEBI" id="CHEBI:18420"/>
    </ligand>
</feature>
<feature type="binding site" evidence="2">
    <location>
        <begin position="82"/>
        <end position="86"/>
    </location>
    <ligand>
        <name>GTP</name>
        <dbReference type="ChEBI" id="CHEBI:37565"/>
    </ligand>
</feature>
<feature type="binding site" evidence="2">
    <location>
        <begin position="137"/>
        <end position="140"/>
    </location>
    <ligand>
        <name>GTP</name>
        <dbReference type="ChEBI" id="CHEBI:37565"/>
    </ligand>
</feature>